<evidence type="ECO:0000305" key="1"/>
<reference key="1">
    <citation type="journal article" date="1998" name="Nature">
        <title>Deciphering the biology of Mycobacterium tuberculosis from the complete genome sequence.</title>
        <authorList>
            <person name="Cole S.T."/>
            <person name="Brosch R."/>
            <person name="Parkhill J."/>
            <person name="Garnier T."/>
            <person name="Churcher C.M."/>
            <person name="Harris D.E."/>
            <person name="Gordon S.V."/>
            <person name="Eiglmeier K."/>
            <person name="Gas S."/>
            <person name="Barry C.E. III"/>
            <person name="Tekaia F."/>
            <person name="Badcock K."/>
            <person name="Basham D."/>
            <person name="Brown D."/>
            <person name="Chillingworth T."/>
            <person name="Connor R."/>
            <person name="Davies R.M."/>
            <person name="Devlin K."/>
            <person name="Feltwell T."/>
            <person name="Gentles S."/>
            <person name="Hamlin N."/>
            <person name="Holroyd S."/>
            <person name="Hornsby T."/>
            <person name="Jagels K."/>
            <person name="Krogh A."/>
            <person name="McLean J."/>
            <person name="Moule S."/>
            <person name="Murphy L.D."/>
            <person name="Oliver S."/>
            <person name="Osborne J."/>
            <person name="Quail M.A."/>
            <person name="Rajandream M.A."/>
            <person name="Rogers J."/>
            <person name="Rutter S."/>
            <person name="Seeger K."/>
            <person name="Skelton S."/>
            <person name="Squares S."/>
            <person name="Squares R."/>
            <person name="Sulston J.E."/>
            <person name="Taylor K."/>
            <person name="Whitehead S."/>
            <person name="Barrell B.G."/>
        </authorList>
    </citation>
    <scope>NUCLEOTIDE SEQUENCE [LARGE SCALE GENOMIC DNA]</scope>
    <source>
        <strain>ATCC 25618 / H37Rv</strain>
    </source>
</reference>
<reference key="2">
    <citation type="journal article" date="2008" name="BMC Syst. Biol.">
        <title>targetTB: a target identification pipeline for Mycobacterium tuberculosis through an interactome, reactome and genome-scale structural analysis.</title>
        <authorList>
            <person name="Raman K."/>
            <person name="Yeturu K."/>
            <person name="Chandra N."/>
        </authorList>
    </citation>
    <scope>IDENTIFICATION AS A DRUG TARGET [LARGE SCALE ANALYSIS]</scope>
</reference>
<keyword id="KW-1185">Reference proteome</keyword>
<name>PPE12_MYCTU</name>
<feature type="chain" id="PRO_0000378476" description="Uncharacterized PPE family protein PPE12">
    <location>
        <begin position="1"/>
        <end position="645"/>
    </location>
</feature>
<sequence length="645" mass="62693">MVGFAWLPPETNSLRMYLGAGSRPLLAAAGAWDGLAEELHAAASSFGSVTSELAGGAWQGPASAAMANAAGPYASWLTAAGAQAELAARQARAAAGAFEEALAGVVHPAVVQANRVRTWLLAVSNVFGQNAPAIAAMESTYEQMWAQDVAVMAGYHAASSAAAAQLASWQPALPNINLGVGNIGNLNVGNGNTGDYNLGNGNLGNANFGGGNGSAFHGQISSFNVGSGNIGNFNLGSGNGNVGIGPSSFNVGSGNIGNANVGGGNSGDNNFGFGNFGNANIGIGNAGPNMSSPAVPTPGNGNVGIGNGGNGNFGGGNTGNANIGLGNVGDGNVGFGNSGSYNFGFGNTGNNNIGIGLTGSNQIGFGGLNSGSGNIGFGNSGTGNIGFFNSGSGNFGVGNSGVTNTGVANSGNINTGFGNSGFINTGFGNALSVNTGFGNSGQANTGIGNAGDFNTGNFNGGIINTGSFNSGAFNSGSFNGGDANSGFLNSGLTNTGFANSGNINTGGFNAGNLNTGFGNTTDGLGENSGFGNAGSGNSGFNNSGRGNSGAQNVGNLQISGFANSGQSVTGYNNSVSVTSGFGNKGTGLFSGFMSGFGNTGFLQSGFGNLEANPDNNSATSGFGNSGKQDSGGFNSIDFVSGFFHR</sequence>
<proteinExistence type="inferred from homology"/>
<dbReference type="EMBL" id="AL123456">
    <property type="protein sequence ID" value="CCP43501.1"/>
    <property type="molecule type" value="Genomic_DNA"/>
</dbReference>
<dbReference type="PIR" id="F70825">
    <property type="entry name" value="F70825"/>
</dbReference>
<dbReference type="RefSeq" id="WP_003898574.1">
    <property type="nucleotide sequence ID" value="NZ_NVQJ01000035.1"/>
</dbReference>
<dbReference type="RefSeq" id="YP_177753.1">
    <property type="nucleotide sequence ID" value="NC_000962.3"/>
</dbReference>
<dbReference type="STRING" id="83332.Rv0755c"/>
<dbReference type="PaxDb" id="83332-Rv0755c"/>
<dbReference type="DNASU" id="888708"/>
<dbReference type="GeneID" id="888708"/>
<dbReference type="KEGG" id="mtu:Rv0755c"/>
<dbReference type="KEGG" id="mtv:RVBD_0755c"/>
<dbReference type="TubercuList" id="Rv0755c"/>
<dbReference type="eggNOG" id="COG5263">
    <property type="taxonomic scope" value="Bacteria"/>
</dbReference>
<dbReference type="eggNOG" id="COG5651">
    <property type="taxonomic scope" value="Bacteria"/>
</dbReference>
<dbReference type="InParanoid" id="P9WI37"/>
<dbReference type="OrthoDB" id="4709210at2"/>
<dbReference type="PhylomeDB" id="P9WI37"/>
<dbReference type="Proteomes" id="UP000001584">
    <property type="component" value="Chromosome"/>
</dbReference>
<dbReference type="GO" id="GO:0052572">
    <property type="term" value="P:response to host immune response"/>
    <property type="evidence" value="ECO:0000318"/>
    <property type="project" value="GO_Central"/>
</dbReference>
<dbReference type="FunFam" id="1.20.1260.20:FF:000001">
    <property type="entry name" value="PPE family protein PPE41"/>
    <property type="match status" value="1"/>
</dbReference>
<dbReference type="Gene3D" id="1.20.1260.20">
    <property type="entry name" value="PPE superfamily"/>
    <property type="match status" value="1"/>
</dbReference>
<dbReference type="InterPro" id="IPR002989">
    <property type="entry name" value="Mycobac_pentapep"/>
</dbReference>
<dbReference type="InterPro" id="IPR000030">
    <property type="entry name" value="PPE_dom"/>
</dbReference>
<dbReference type="InterPro" id="IPR038332">
    <property type="entry name" value="PPE_sf"/>
</dbReference>
<dbReference type="PANTHER" id="PTHR46766">
    <property type="entry name" value="GLUTAMINE-RICH PROTEIN 2"/>
    <property type="match status" value="1"/>
</dbReference>
<dbReference type="PANTHER" id="PTHR46766:SF1">
    <property type="entry name" value="GLUTAMINE-RICH PROTEIN 2"/>
    <property type="match status" value="1"/>
</dbReference>
<dbReference type="Pfam" id="PF01469">
    <property type="entry name" value="Pentapeptide_2"/>
    <property type="match status" value="5"/>
</dbReference>
<dbReference type="Pfam" id="PF00823">
    <property type="entry name" value="PPE"/>
    <property type="match status" value="1"/>
</dbReference>
<dbReference type="SUPFAM" id="SSF140459">
    <property type="entry name" value="PE/PPE dimer-like"/>
    <property type="match status" value="1"/>
</dbReference>
<accession>P9WI37</accession>
<accession>L0T4T0</accession>
<accession>Q79FW4</accession>
<accession>Q7D9B9</accession>
<organism>
    <name type="scientific">Mycobacterium tuberculosis (strain ATCC 25618 / H37Rv)</name>
    <dbReference type="NCBI Taxonomy" id="83332"/>
    <lineage>
        <taxon>Bacteria</taxon>
        <taxon>Bacillati</taxon>
        <taxon>Actinomycetota</taxon>
        <taxon>Actinomycetes</taxon>
        <taxon>Mycobacteriales</taxon>
        <taxon>Mycobacteriaceae</taxon>
        <taxon>Mycobacterium</taxon>
        <taxon>Mycobacterium tuberculosis complex</taxon>
    </lineage>
</organism>
<gene>
    <name type="primary">PPE12</name>
    <name type="ordered locus">Rv0755c</name>
</gene>
<protein>
    <recommendedName>
        <fullName>Uncharacterized PPE family protein PPE12</fullName>
    </recommendedName>
</protein>
<comment type="miscellaneous">
    <text>Was identified as a high-confidence drug target.</text>
</comment>
<comment type="similarity">
    <text evidence="1">Belongs to the mycobacterial PPE family.</text>
</comment>